<sequence length="316" mass="34428">MAAKPPLTLYLAAPRGFCAGVDRAIKIVEMALEKWGAPVYVRHEIVHNKFVVDGLRDKGAVFVEELEECPDDRPVIFSAHGVPKSVPAAAEARQMVYVDATCPLVSKVHIEAQRHAEAGLQMIMIGHKGHPETVGTMGQLPEGEVLLVETVEDVAQVEVRDPERLAFVTQTTLSVDDTKDIVAALQARFPAIVGPHKEDICYATTNRQEAVKEVAPKADALLVVGAPNSSNSRRLVEVGAKNGCSYAQLVQRAENIDWRALEGIQSIAITAGASAPELLVNEVIDAFRDRYEVTVELVETAVERVEFKVPRVLRTA</sequence>
<gene>
    <name evidence="1" type="primary">ispH</name>
    <name type="ordered locus">TM1040_2569</name>
</gene>
<reference key="1">
    <citation type="submission" date="2006-05" db="EMBL/GenBank/DDBJ databases">
        <title>Complete sequence of chromosome of Silicibacter sp. TM1040.</title>
        <authorList>
            <consortium name="US DOE Joint Genome Institute"/>
            <person name="Copeland A."/>
            <person name="Lucas S."/>
            <person name="Lapidus A."/>
            <person name="Barry K."/>
            <person name="Detter J.C."/>
            <person name="Glavina del Rio T."/>
            <person name="Hammon N."/>
            <person name="Israni S."/>
            <person name="Dalin E."/>
            <person name="Tice H."/>
            <person name="Pitluck S."/>
            <person name="Brettin T."/>
            <person name="Bruce D."/>
            <person name="Han C."/>
            <person name="Tapia R."/>
            <person name="Goodwin L."/>
            <person name="Thompson L.S."/>
            <person name="Gilna P."/>
            <person name="Schmutz J."/>
            <person name="Larimer F."/>
            <person name="Land M."/>
            <person name="Hauser L."/>
            <person name="Kyrpides N."/>
            <person name="Kim E."/>
            <person name="Belas R."/>
            <person name="Moran M.A."/>
            <person name="Buchan A."/>
            <person name="Gonzalez J.M."/>
            <person name="Schell M.A."/>
            <person name="Sun F."/>
            <person name="Richardson P."/>
        </authorList>
    </citation>
    <scope>NUCLEOTIDE SEQUENCE [LARGE SCALE GENOMIC DNA]</scope>
    <source>
        <strain>TM1040</strain>
    </source>
</reference>
<dbReference type="EC" id="1.17.7.4" evidence="1"/>
<dbReference type="EMBL" id="CP000377">
    <property type="protein sequence ID" value="ABF65301.1"/>
    <property type="molecule type" value="Genomic_DNA"/>
</dbReference>
<dbReference type="RefSeq" id="WP_011539884.1">
    <property type="nucleotide sequence ID" value="NC_008044.1"/>
</dbReference>
<dbReference type="SMR" id="Q1GDG5"/>
<dbReference type="STRING" id="292414.TM1040_2569"/>
<dbReference type="KEGG" id="sit:TM1040_2569"/>
<dbReference type="eggNOG" id="COG0761">
    <property type="taxonomic scope" value="Bacteria"/>
</dbReference>
<dbReference type="HOGENOM" id="CLU_027486_1_0_5"/>
<dbReference type="OrthoDB" id="9804068at2"/>
<dbReference type="UniPathway" id="UPA00056">
    <property type="reaction ID" value="UER00097"/>
</dbReference>
<dbReference type="UniPathway" id="UPA00059">
    <property type="reaction ID" value="UER00105"/>
</dbReference>
<dbReference type="Proteomes" id="UP000000636">
    <property type="component" value="Chromosome"/>
</dbReference>
<dbReference type="GO" id="GO:0051539">
    <property type="term" value="F:4 iron, 4 sulfur cluster binding"/>
    <property type="evidence" value="ECO:0007669"/>
    <property type="project" value="UniProtKB-UniRule"/>
</dbReference>
<dbReference type="GO" id="GO:0051745">
    <property type="term" value="F:4-hydroxy-3-methylbut-2-enyl diphosphate reductase activity"/>
    <property type="evidence" value="ECO:0007669"/>
    <property type="project" value="UniProtKB-UniRule"/>
</dbReference>
<dbReference type="GO" id="GO:0046872">
    <property type="term" value="F:metal ion binding"/>
    <property type="evidence" value="ECO:0007669"/>
    <property type="project" value="UniProtKB-KW"/>
</dbReference>
<dbReference type="GO" id="GO:0050992">
    <property type="term" value="P:dimethylallyl diphosphate biosynthetic process"/>
    <property type="evidence" value="ECO:0007669"/>
    <property type="project" value="UniProtKB-UniRule"/>
</dbReference>
<dbReference type="GO" id="GO:0019288">
    <property type="term" value="P:isopentenyl diphosphate biosynthetic process, methylerythritol 4-phosphate pathway"/>
    <property type="evidence" value="ECO:0007669"/>
    <property type="project" value="UniProtKB-UniRule"/>
</dbReference>
<dbReference type="GO" id="GO:0016114">
    <property type="term" value="P:terpenoid biosynthetic process"/>
    <property type="evidence" value="ECO:0007669"/>
    <property type="project" value="UniProtKB-UniRule"/>
</dbReference>
<dbReference type="CDD" id="cd13944">
    <property type="entry name" value="lytB_ispH"/>
    <property type="match status" value="1"/>
</dbReference>
<dbReference type="Gene3D" id="3.40.50.11270">
    <property type="match status" value="1"/>
</dbReference>
<dbReference type="Gene3D" id="3.40.1010.20">
    <property type="entry name" value="4-hydroxy-3-methylbut-2-enyl diphosphate reductase, catalytic domain"/>
    <property type="match status" value="2"/>
</dbReference>
<dbReference type="HAMAP" id="MF_00191">
    <property type="entry name" value="IspH"/>
    <property type="match status" value="1"/>
</dbReference>
<dbReference type="InterPro" id="IPR003451">
    <property type="entry name" value="LytB/IspH"/>
</dbReference>
<dbReference type="NCBIfam" id="TIGR00216">
    <property type="entry name" value="ispH_lytB"/>
    <property type="match status" value="1"/>
</dbReference>
<dbReference type="NCBIfam" id="NF002188">
    <property type="entry name" value="PRK01045.1-2"/>
    <property type="match status" value="1"/>
</dbReference>
<dbReference type="NCBIfam" id="NF002190">
    <property type="entry name" value="PRK01045.1-4"/>
    <property type="match status" value="1"/>
</dbReference>
<dbReference type="PANTHER" id="PTHR30426">
    <property type="entry name" value="4-HYDROXY-3-METHYLBUT-2-ENYL DIPHOSPHATE REDUCTASE"/>
    <property type="match status" value="1"/>
</dbReference>
<dbReference type="PANTHER" id="PTHR30426:SF0">
    <property type="entry name" value="4-HYDROXY-3-METHYLBUT-2-ENYL DIPHOSPHATE REDUCTASE"/>
    <property type="match status" value="1"/>
</dbReference>
<dbReference type="Pfam" id="PF02401">
    <property type="entry name" value="LYTB"/>
    <property type="match status" value="1"/>
</dbReference>
<proteinExistence type="inferred from homology"/>
<keyword id="KW-0004">4Fe-4S</keyword>
<keyword id="KW-0408">Iron</keyword>
<keyword id="KW-0411">Iron-sulfur</keyword>
<keyword id="KW-0414">Isoprene biosynthesis</keyword>
<keyword id="KW-0479">Metal-binding</keyword>
<keyword id="KW-0560">Oxidoreductase</keyword>
<keyword id="KW-1185">Reference proteome</keyword>
<organism>
    <name type="scientific">Ruegeria sp. (strain TM1040)</name>
    <name type="common">Silicibacter sp.</name>
    <dbReference type="NCBI Taxonomy" id="292414"/>
    <lineage>
        <taxon>Bacteria</taxon>
        <taxon>Pseudomonadati</taxon>
        <taxon>Pseudomonadota</taxon>
        <taxon>Alphaproteobacteria</taxon>
        <taxon>Rhodobacterales</taxon>
        <taxon>Roseobacteraceae</taxon>
        <taxon>Ruegeria</taxon>
    </lineage>
</organism>
<comment type="function">
    <text evidence="1">Catalyzes the conversion of 1-hydroxy-2-methyl-2-(E)-butenyl 4-diphosphate (HMBPP) into a mixture of isopentenyl diphosphate (IPP) and dimethylallyl diphosphate (DMAPP). Acts in the terminal step of the DOXP/MEP pathway for isoprenoid precursor biosynthesis.</text>
</comment>
<comment type="catalytic activity">
    <reaction evidence="1">
        <text>isopentenyl diphosphate + 2 oxidized [2Fe-2S]-[ferredoxin] + H2O = (2E)-4-hydroxy-3-methylbut-2-enyl diphosphate + 2 reduced [2Fe-2S]-[ferredoxin] + 2 H(+)</text>
        <dbReference type="Rhea" id="RHEA:24488"/>
        <dbReference type="Rhea" id="RHEA-COMP:10000"/>
        <dbReference type="Rhea" id="RHEA-COMP:10001"/>
        <dbReference type="ChEBI" id="CHEBI:15377"/>
        <dbReference type="ChEBI" id="CHEBI:15378"/>
        <dbReference type="ChEBI" id="CHEBI:33737"/>
        <dbReference type="ChEBI" id="CHEBI:33738"/>
        <dbReference type="ChEBI" id="CHEBI:128753"/>
        <dbReference type="ChEBI" id="CHEBI:128769"/>
        <dbReference type="EC" id="1.17.7.4"/>
    </reaction>
</comment>
<comment type="catalytic activity">
    <reaction evidence="1">
        <text>dimethylallyl diphosphate + 2 oxidized [2Fe-2S]-[ferredoxin] + H2O = (2E)-4-hydroxy-3-methylbut-2-enyl diphosphate + 2 reduced [2Fe-2S]-[ferredoxin] + 2 H(+)</text>
        <dbReference type="Rhea" id="RHEA:24825"/>
        <dbReference type="Rhea" id="RHEA-COMP:10000"/>
        <dbReference type="Rhea" id="RHEA-COMP:10001"/>
        <dbReference type="ChEBI" id="CHEBI:15377"/>
        <dbReference type="ChEBI" id="CHEBI:15378"/>
        <dbReference type="ChEBI" id="CHEBI:33737"/>
        <dbReference type="ChEBI" id="CHEBI:33738"/>
        <dbReference type="ChEBI" id="CHEBI:57623"/>
        <dbReference type="ChEBI" id="CHEBI:128753"/>
        <dbReference type="EC" id="1.17.7.4"/>
    </reaction>
</comment>
<comment type="cofactor">
    <cofactor evidence="1">
        <name>[4Fe-4S] cluster</name>
        <dbReference type="ChEBI" id="CHEBI:49883"/>
    </cofactor>
    <text evidence="1">Binds 1 [4Fe-4S] cluster per subunit.</text>
</comment>
<comment type="pathway">
    <text evidence="1">Isoprenoid biosynthesis; dimethylallyl diphosphate biosynthesis; dimethylallyl diphosphate from (2E)-4-hydroxy-3-methylbutenyl diphosphate: step 1/1.</text>
</comment>
<comment type="pathway">
    <text evidence="1">Isoprenoid biosynthesis; isopentenyl diphosphate biosynthesis via DXP pathway; isopentenyl diphosphate from 1-deoxy-D-xylulose 5-phosphate: step 6/6.</text>
</comment>
<comment type="similarity">
    <text evidence="1">Belongs to the IspH family.</text>
</comment>
<accession>Q1GDG5</accession>
<evidence type="ECO:0000255" key="1">
    <source>
        <dbReference type="HAMAP-Rule" id="MF_00191"/>
    </source>
</evidence>
<protein>
    <recommendedName>
        <fullName evidence="1">4-hydroxy-3-methylbut-2-enyl diphosphate reductase</fullName>
        <shortName evidence="1">HMBPP reductase</shortName>
        <ecNumber evidence="1">1.17.7.4</ecNumber>
    </recommendedName>
</protein>
<feature type="chain" id="PRO_1000021181" description="4-hydroxy-3-methylbut-2-enyl diphosphate reductase">
    <location>
        <begin position="1"/>
        <end position="316"/>
    </location>
</feature>
<feature type="active site" description="Proton donor" evidence="1">
    <location>
        <position position="132"/>
    </location>
</feature>
<feature type="binding site" evidence="1">
    <location>
        <position position="18"/>
    </location>
    <ligand>
        <name>[4Fe-4S] cluster</name>
        <dbReference type="ChEBI" id="CHEBI:49883"/>
    </ligand>
</feature>
<feature type="binding site" evidence="1">
    <location>
        <position position="47"/>
    </location>
    <ligand>
        <name>(2E)-4-hydroxy-3-methylbut-2-enyl diphosphate</name>
        <dbReference type="ChEBI" id="CHEBI:128753"/>
    </ligand>
</feature>
<feature type="binding site" evidence="1">
    <location>
        <position position="47"/>
    </location>
    <ligand>
        <name>dimethylallyl diphosphate</name>
        <dbReference type="ChEBI" id="CHEBI:57623"/>
    </ligand>
</feature>
<feature type="binding site" evidence="1">
    <location>
        <position position="47"/>
    </location>
    <ligand>
        <name>isopentenyl diphosphate</name>
        <dbReference type="ChEBI" id="CHEBI:128769"/>
    </ligand>
</feature>
<feature type="binding site" evidence="1">
    <location>
        <position position="80"/>
    </location>
    <ligand>
        <name>(2E)-4-hydroxy-3-methylbut-2-enyl diphosphate</name>
        <dbReference type="ChEBI" id="CHEBI:128753"/>
    </ligand>
</feature>
<feature type="binding site" evidence="1">
    <location>
        <position position="80"/>
    </location>
    <ligand>
        <name>dimethylallyl diphosphate</name>
        <dbReference type="ChEBI" id="CHEBI:57623"/>
    </ligand>
</feature>
<feature type="binding site" evidence="1">
    <location>
        <position position="80"/>
    </location>
    <ligand>
        <name>isopentenyl diphosphate</name>
        <dbReference type="ChEBI" id="CHEBI:128769"/>
    </ligand>
</feature>
<feature type="binding site" evidence="1">
    <location>
        <position position="102"/>
    </location>
    <ligand>
        <name>[4Fe-4S] cluster</name>
        <dbReference type="ChEBI" id="CHEBI:49883"/>
    </ligand>
</feature>
<feature type="binding site" evidence="1">
    <location>
        <position position="130"/>
    </location>
    <ligand>
        <name>(2E)-4-hydroxy-3-methylbut-2-enyl diphosphate</name>
        <dbReference type="ChEBI" id="CHEBI:128753"/>
    </ligand>
</feature>
<feature type="binding site" evidence="1">
    <location>
        <position position="130"/>
    </location>
    <ligand>
        <name>dimethylallyl diphosphate</name>
        <dbReference type="ChEBI" id="CHEBI:57623"/>
    </ligand>
</feature>
<feature type="binding site" evidence="1">
    <location>
        <position position="130"/>
    </location>
    <ligand>
        <name>isopentenyl diphosphate</name>
        <dbReference type="ChEBI" id="CHEBI:128769"/>
    </ligand>
</feature>
<feature type="binding site" evidence="1">
    <location>
        <position position="171"/>
    </location>
    <ligand>
        <name>(2E)-4-hydroxy-3-methylbut-2-enyl diphosphate</name>
        <dbReference type="ChEBI" id="CHEBI:128753"/>
    </ligand>
</feature>
<feature type="binding site" evidence="1">
    <location>
        <position position="201"/>
    </location>
    <ligand>
        <name>[4Fe-4S] cluster</name>
        <dbReference type="ChEBI" id="CHEBI:49883"/>
    </ligand>
</feature>
<feature type="binding site" evidence="1">
    <location>
        <position position="229"/>
    </location>
    <ligand>
        <name>(2E)-4-hydroxy-3-methylbut-2-enyl diphosphate</name>
        <dbReference type="ChEBI" id="CHEBI:128753"/>
    </ligand>
</feature>
<feature type="binding site" evidence="1">
    <location>
        <position position="229"/>
    </location>
    <ligand>
        <name>dimethylallyl diphosphate</name>
        <dbReference type="ChEBI" id="CHEBI:57623"/>
    </ligand>
</feature>
<feature type="binding site" evidence="1">
    <location>
        <position position="229"/>
    </location>
    <ligand>
        <name>isopentenyl diphosphate</name>
        <dbReference type="ChEBI" id="CHEBI:128769"/>
    </ligand>
</feature>
<feature type="binding site" evidence="1">
    <location>
        <position position="230"/>
    </location>
    <ligand>
        <name>(2E)-4-hydroxy-3-methylbut-2-enyl diphosphate</name>
        <dbReference type="ChEBI" id="CHEBI:128753"/>
    </ligand>
</feature>
<feature type="binding site" evidence="1">
    <location>
        <position position="230"/>
    </location>
    <ligand>
        <name>dimethylallyl diphosphate</name>
        <dbReference type="ChEBI" id="CHEBI:57623"/>
    </ligand>
</feature>
<feature type="binding site" evidence="1">
    <location>
        <position position="230"/>
    </location>
    <ligand>
        <name>isopentenyl diphosphate</name>
        <dbReference type="ChEBI" id="CHEBI:128769"/>
    </ligand>
</feature>
<feature type="binding site" evidence="1">
    <location>
        <position position="231"/>
    </location>
    <ligand>
        <name>(2E)-4-hydroxy-3-methylbut-2-enyl diphosphate</name>
        <dbReference type="ChEBI" id="CHEBI:128753"/>
    </ligand>
</feature>
<feature type="binding site" evidence="1">
    <location>
        <position position="231"/>
    </location>
    <ligand>
        <name>dimethylallyl diphosphate</name>
        <dbReference type="ChEBI" id="CHEBI:57623"/>
    </ligand>
</feature>
<feature type="binding site" evidence="1">
    <location>
        <position position="231"/>
    </location>
    <ligand>
        <name>isopentenyl diphosphate</name>
        <dbReference type="ChEBI" id="CHEBI:128769"/>
    </ligand>
</feature>
<feature type="binding site" evidence="1">
    <location>
        <position position="274"/>
    </location>
    <ligand>
        <name>(2E)-4-hydroxy-3-methylbut-2-enyl diphosphate</name>
        <dbReference type="ChEBI" id="CHEBI:128753"/>
    </ligand>
</feature>
<feature type="binding site" evidence="1">
    <location>
        <position position="274"/>
    </location>
    <ligand>
        <name>dimethylallyl diphosphate</name>
        <dbReference type="ChEBI" id="CHEBI:57623"/>
    </ligand>
</feature>
<feature type="binding site" evidence="1">
    <location>
        <position position="274"/>
    </location>
    <ligand>
        <name>isopentenyl diphosphate</name>
        <dbReference type="ChEBI" id="CHEBI:128769"/>
    </ligand>
</feature>
<name>ISPH_RUEST</name>